<comment type="function">
    <text evidence="1">Binds directly to 16S ribosomal RNA.</text>
</comment>
<comment type="similarity">
    <text evidence="1">Belongs to the bacterial ribosomal protein bS20 family.</text>
</comment>
<evidence type="ECO:0000255" key="1">
    <source>
        <dbReference type="HAMAP-Rule" id="MF_00500"/>
    </source>
</evidence>
<evidence type="ECO:0000256" key="2">
    <source>
        <dbReference type="SAM" id="MobiDB-lite"/>
    </source>
</evidence>
<evidence type="ECO:0000305" key="3"/>
<accession>B5R0X8</accession>
<dbReference type="EMBL" id="AM933172">
    <property type="protein sequence ID" value="CAR31634.1"/>
    <property type="molecule type" value="Genomic_DNA"/>
</dbReference>
<dbReference type="RefSeq" id="WP_001518655.1">
    <property type="nucleotide sequence ID" value="NC_011294.1"/>
</dbReference>
<dbReference type="SMR" id="B5R0X8"/>
<dbReference type="GeneID" id="93310349"/>
<dbReference type="KEGG" id="set:SEN0043"/>
<dbReference type="HOGENOM" id="CLU_160655_4_0_6"/>
<dbReference type="Proteomes" id="UP000000613">
    <property type="component" value="Chromosome"/>
</dbReference>
<dbReference type="GO" id="GO:0005829">
    <property type="term" value="C:cytosol"/>
    <property type="evidence" value="ECO:0007669"/>
    <property type="project" value="TreeGrafter"/>
</dbReference>
<dbReference type="GO" id="GO:0015935">
    <property type="term" value="C:small ribosomal subunit"/>
    <property type="evidence" value="ECO:0007669"/>
    <property type="project" value="TreeGrafter"/>
</dbReference>
<dbReference type="GO" id="GO:0070181">
    <property type="term" value="F:small ribosomal subunit rRNA binding"/>
    <property type="evidence" value="ECO:0007669"/>
    <property type="project" value="TreeGrafter"/>
</dbReference>
<dbReference type="GO" id="GO:0003735">
    <property type="term" value="F:structural constituent of ribosome"/>
    <property type="evidence" value="ECO:0007669"/>
    <property type="project" value="InterPro"/>
</dbReference>
<dbReference type="GO" id="GO:0006412">
    <property type="term" value="P:translation"/>
    <property type="evidence" value="ECO:0007669"/>
    <property type="project" value="UniProtKB-UniRule"/>
</dbReference>
<dbReference type="FunFam" id="1.20.58.110:FF:000001">
    <property type="entry name" value="30S ribosomal protein S20"/>
    <property type="match status" value="1"/>
</dbReference>
<dbReference type="Gene3D" id="1.20.58.110">
    <property type="entry name" value="Ribosomal protein S20"/>
    <property type="match status" value="1"/>
</dbReference>
<dbReference type="HAMAP" id="MF_00500">
    <property type="entry name" value="Ribosomal_bS20"/>
    <property type="match status" value="1"/>
</dbReference>
<dbReference type="InterPro" id="IPR002583">
    <property type="entry name" value="Ribosomal_bS20"/>
</dbReference>
<dbReference type="InterPro" id="IPR036510">
    <property type="entry name" value="Ribosomal_bS20_sf"/>
</dbReference>
<dbReference type="NCBIfam" id="TIGR00029">
    <property type="entry name" value="S20"/>
    <property type="match status" value="1"/>
</dbReference>
<dbReference type="PANTHER" id="PTHR33398">
    <property type="entry name" value="30S RIBOSOMAL PROTEIN S20"/>
    <property type="match status" value="1"/>
</dbReference>
<dbReference type="PANTHER" id="PTHR33398:SF1">
    <property type="entry name" value="SMALL RIBOSOMAL SUBUNIT PROTEIN BS20C"/>
    <property type="match status" value="1"/>
</dbReference>
<dbReference type="Pfam" id="PF01649">
    <property type="entry name" value="Ribosomal_S20p"/>
    <property type="match status" value="1"/>
</dbReference>
<dbReference type="SUPFAM" id="SSF46992">
    <property type="entry name" value="Ribosomal protein S20"/>
    <property type="match status" value="1"/>
</dbReference>
<reference key="1">
    <citation type="journal article" date="2008" name="Genome Res.">
        <title>Comparative genome analysis of Salmonella enteritidis PT4 and Salmonella gallinarum 287/91 provides insights into evolutionary and host adaptation pathways.</title>
        <authorList>
            <person name="Thomson N.R."/>
            <person name="Clayton D.J."/>
            <person name="Windhorst D."/>
            <person name="Vernikos G."/>
            <person name="Davidson S."/>
            <person name="Churcher C."/>
            <person name="Quail M.A."/>
            <person name="Stevens M."/>
            <person name="Jones M.A."/>
            <person name="Watson M."/>
            <person name="Barron A."/>
            <person name="Layton A."/>
            <person name="Pickard D."/>
            <person name="Kingsley R.A."/>
            <person name="Bignell A."/>
            <person name="Clark L."/>
            <person name="Harris B."/>
            <person name="Ormond D."/>
            <person name="Abdellah Z."/>
            <person name="Brooks K."/>
            <person name="Cherevach I."/>
            <person name="Chillingworth T."/>
            <person name="Woodward J."/>
            <person name="Norberczak H."/>
            <person name="Lord A."/>
            <person name="Arrowsmith C."/>
            <person name="Jagels K."/>
            <person name="Moule S."/>
            <person name="Mungall K."/>
            <person name="Saunders M."/>
            <person name="Whitehead S."/>
            <person name="Chabalgoity J.A."/>
            <person name="Maskell D."/>
            <person name="Humphreys T."/>
            <person name="Roberts M."/>
            <person name="Barrow P.A."/>
            <person name="Dougan G."/>
            <person name="Parkhill J."/>
        </authorList>
    </citation>
    <scope>NUCLEOTIDE SEQUENCE [LARGE SCALE GENOMIC DNA]</scope>
    <source>
        <strain>P125109</strain>
    </source>
</reference>
<proteinExistence type="inferred from homology"/>
<name>RS20_SALEP</name>
<keyword id="KW-0687">Ribonucleoprotein</keyword>
<keyword id="KW-0689">Ribosomal protein</keyword>
<keyword id="KW-0694">RNA-binding</keyword>
<keyword id="KW-0699">rRNA-binding</keyword>
<protein>
    <recommendedName>
        <fullName evidence="1">Small ribosomal subunit protein bS20</fullName>
    </recommendedName>
    <alternativeName>
        <fullName evidence="3">30S ribosomal protein S20</fullName>
    </alternativeName>
</protein>
<organism>
    <name type="scientific">Salmonella enteritidis PT4 (strain P125109)</name>
    <dbReference type="NCBI Taxonomy" id="550537"/>
    <lineage>
        <taxon>Bacteria</taxon>
        <taxon>Pseudomonadati</taxon>
        <taxon>Pseudomonadota</taxon>
        <taxon>Gammaproteobacteria</taxon>
        <taxon>Enterobacterales</taxon>
        <taxon>Enterobacteriaceae</taxon>
        <taxon>Salmonella</taxon>
    </lineage>
</organism>
<sequence length="87" mass="9655">MANIKSAKKRAVQSEKARKHNASRRSMMRTFIKKVYAAIEAGDKAAALKAFNEMQPIVDRQAAKGLIHKNKAARHKANLTAQINKLA</sequence>
<feature type="chain" id="PRO_1000126506" description="Small ribosomal subunit protein bS20">
    <location>
        <begin position="1"/>
        <end position="87"/>
    </location>
</feature>
<feature type="region of interest" description="Disordered" evidence="2">
    <location>
        <begin position="1"/>
        <end position="26"/>
    </location>
</feature>
<gene>
    <name evidence="1" type="primary">rpsT</name>
    <name type="ordered locus">SEN0043</name>
</gene>